<name>RPPH_POLAQ</name>
<protein>
    <recommendedName>
        <fullName evidence="1">RNA pyrophosphohydrolase</fullName>
        <ecNumber evidence="1">3.6.1.-</ecNumber>
    </recommendedName>
    <alternativeName>
        <fullName evidence="1">(Di)nucleoside polyphosphate hydrolase</fullName>
    </alternativeName>
</protein>
<sequence length="199" mass="23427">MLDREGYRPNVGIVLLNSRNEVFWGKRVGQHSWQFPQGGIQHGESPEQAMYRELHEEVGLLPEHVQIIGRTRDWLRYDVPEEYLRRQHATRVHRAAYRGQKQIWFLLRLVGLDSDIQLRASEHPEFDAWRWVPFWIQLDAVIGFKREVYELALSELARYLSRGVRMHQLAWGSPLDLLQSFYSKGEEGSPESSKTDKSK</sequence>
<feature type="chain" id="PRO_1000078970" description="RNA pyrophosphohydrolase">
    <location>
        <begin position="1"/>
        <end position="199"/>
    </location>
</feature>
<feature type="domain" description="Nudix hydrolase" evidence="1">
    <location>
        <begin position="6"/>
        <end position="154"/>
    </location>
</feature>
<feature type="short sequence motif" description="Nudix box">
    <location>
        <begin position="38"/>
        <end position="59"/>
    </location>
</feature>
<gene>
    <name evidence="1" type="primary">rppH</name>
    <name evidence="1" type="synonym">nudH</name>
    <name type="ordered locus">Pnuc_0199</name>
</gene>
<proteinExistence type="inferred from homology"/>
<dbReference type="EC" id="3.6.1.-" evidence="1"/>
<dbReference type="EMBL" id="CP000655">
    <property type="protein sequence ID" value="ABP33420.1"/>
    <property type="molecule type" value="Genomic_DNA"/>
</dbReference>
<dbReference type="RefSeq" id="WP_011902045.1">
    <property type="nucleotide sequence ID" value="NC_009379.1"/>
</dbReference>
<dbReference type="SMR" id="A4SVA6"/>
<dbReference type="GeneID" id="31480548"/>
<dbReference type="KEGG" id="pnu:Pnuc_0199"/>
<dbReference type="eggNOG" id="COG0494">
    <property type="taxonomic scope" value="Bacteria"/>
</dbReference>
<dbReference type="HOGENOM" id="CLU_087195_3_1_4"/>
<dbReference type="Proteomes" id="UP000000231">
    <property type="component" value="Chromosome"/>
</dbReference>
<dbReference type="GO" id="GO:0005737">
    <property type="term" value="C:cytoplasm"/>
    <property type="evidence" value="ECO:0007669"/>
    <property type="project" value="TreeGrafter"/>
</dbReference>
<dbReference type="GO" id="GO:0034353">
    <property type="term" value="F:mRNA 5'-diphosphatase activity"/>
    <property type="evidence" value="ECO:0007669"/>
    <property type="project" value="TreeGrafter"/>
</dbReference>
<dbReference type="GO" id="GO:0006402">
    <property type="term" value="P:mRNA catabolic process"/>
    <property type="evidence" value="ECO:0007669"/>
    <property type="project" value="TreeGrafter"/>
</dbReference>
<dbReference type="CDD" id="cd03671">
    <property type="entry name" value="NUDIX_Ap4A_hydrolase_plant_like"/>
    <property type="match status" value="1"/>
</dbReference>
<dbReference type="Gene3D" id="3.90.79.10">
    <property type="entry name" value="Nucleoside Triphosphate Pyrophosphohydrolase"/>
    <property type="match status" value="1"/>
</dbReference>
<dbReference type="HAMAP" id="MF_00298">
    <property type="entry name" value="Nudix_RppH"/>
    <property type="match status" value="1"/>
</dbReference>
<dbReference type="InterPro" id="IPR020476">
    <property type="entry name" value="Nudix_hydrolase"/>
</dbReference>
<dbReference type="InterPro" id="IPR015797">
    <property type="entry name" value="NUDIX_hydrolase-like_dom_sf"/>
</dbReference>
<dbReference type="InterPro" id="IPR020084">
    <property type="entry name" value="NUDIX_hydrolase_CS"/>
</dbReference>
<dbReference type="InterPro" id="IPR000086">
    <property type="entry name" value="NUDIX_hydrolase_dom"/>
</dbReference>
<dbReference type="InterPro" id="IPR022927">
    <property type="entry name" value="RppH"/>
</dbReference>
<dbReference type="NCBIfam" id="NF001935">
    <property type="entry name" value="PRK00714.1-2"/>
    <property type="match status" value="1"/>
</dbReference>
<dbReference type="NCBIfam" id="NF001937">
    <property type="entry name" value="PRK00714.1-4"/>
    <property type="match status" value="1"/>
</dbReference>
<dbReference type="NCBIfam" id="NF001938">
    <property type="entry name" value="PRK00714.1-5"/>
    <property type="match status" value="1"/>
</dbReference>
<dbReference type="PANTHER" id="PTHR23114">
    <property type="entry name" value="M7GPPPN-MRNA HYDROLASE"/>
    <property type="match status" value="1"/>
</dbReference>
<dbReference type="PANTHER" id="PTHR23114:SF17">
    <property type="entry name" value="M7GPPPN-MRNA HYDROLASE"/>
    <property type="match status" value="1"/>
</dbReference>
<dbReference type="Pfam" id="PF00293">
    <property type="entry name" value="NUDIX"/>
    <property type="match status" value="1"/>
</dbReference>
<dbReference type="PRINTS" id="PR00502">
    <property type="entry name" value="NUDIXFAMILY"/>
</dbReference>
<dbReference type="SUPFAM" id="SSF55811">
    <property type="entry name" value="Nudix"/>
    <property type="match status" value="1"/>
</dbReference>
<dbReference type="PROSITE" id="PS51462">
    <property type="entry name" value="NUDIX"/>
    <property type="match status" value="1"/>
</dbReference>
<dbReference type="PROSITE" id="PS00893">
    <property type="entry name" value="NUDIX_BOX"/>
    <property type="match status" value="1"/>
</dbReference>
<keyword id="KW-0378">Hydrolase</keyword>
<keyword id="KW-1185">Reference proteome</keyword>
<organism>
    <name type="scientific">Polynucleobacter asymbioticus (strain DSM 18221 / CIP 109841 / QLW-P1DMWA-1)</name>
    <name type="common">Polynucleobacter necessarius subsp. asymbioticus</name>
    <dbReference type="NCBI Taxonomy" id="312153"/>
    <lineage>
        <taxon>Bacteria</taxon>
        <taxon>Pseudomonadati</taxon>
        <taxon>Pseudomonadota</taxon>
        <taxon>Betaproteobacteria</taxon>
        <taxon>Burkholderiales</taxon>
        <taxon>Burkholderiaceae</taxon>
        <taxon>Polynucleobacter</taxon>
    </lineage>
</organism>
<reference key="1">
    <citation type="journal article" date="2012" name="Stand. Genomic Sci.">
        <title>Complete genome sequence of Polynucleobacter necessarius subsp. asymbioticus type strain (QLW-P1DMWA-1(T)).</title>
        <authorList>
            <person name="Meincke L."/>
            <person name="Copeland A."/>
            <person name="Lapidus A."/>
            <person name="Lucas S."/>
            <person name="Berry K.W."/>
            <person name="Del Rio T.G."/>
            <person name="Hammon N."/>
            <person name="Dalin E."/>
            <person name="Tice H."/>
            <person name="Pitluck S."/>
            <person name="Richardson P."/>
            <person name="Bruce D."/>
            <person name="Goodwin L."/>
            <person name="Han C."/>
            <person name="Tapia R."/>
            <person name="Detter J.C."/>
            <person name="Schmutz J."/>
            <person name="Brettin T."/>
            <person name="Larimer F."/>
            <person name="Land M."/>
            <person name="Hauser L."/>
            <person name="Kyrpides N.C."/>
            <person name="Ivanova N."/>
            <person name="Goker M."/>
            <person name="Woyke T."/>
            <person name="Wu Q.L."/>
            <person name="Pockl M."/>
            <person name="Hahn M.W."/>
            <person name="Klenk H.P."/>
        </authorList>
    </citation>
    <scope>NUCLEOTIDE SEQUENCE [LARGE SCALE GENOMIC DNA]</scope>
    <source>
        <strain>DSM 18221 / CIP 109841 / QLW-P1DMWA-1</strain>
    </source>
</reference>
<comment type="function">
    <text evidence="1">Accelerates the degradation of transcripts by removing pyrophosphate from the 5'-end of triphosphorylated RNA, leading to a more labile monophosphorylated state that can stimulate subsequent ribonuclease cleavage.</text>
</comment>
<comment type="cofactor">
    <cofactor evidence="1">
        <name>a divalent metal cation</name>
        <dbReference type="ChEBI" id="CHEBI:60240"/>
    </cofactor>
</comment>
<comment type="similarity">
    <text evidence="1">Belongs to the Nudix hydrolase family. RppH subfamily.</text>
</comment>
<accession>A4SVA6</accession>
<evidence type="ECO:0000255" key="1">
    <source>
        <dbReference type="HAMAP-Rule" id="MF_00298"/>
    </source>
</evidence>